<accession>Q9I931</accession>
<protein>
    <recommendedName>
        <fullName>Fucolectin-1</fullName>
    </recommendedName>
</protein>
<feature type="signal peptide" evidence="3">
    <location>
        <begin position="1"/>
        <end position="20"/>
    </location>
</feature>
<feature type="chain" id="PRO_0000223932" description="Fucolectin-1" evidence="5">
    <location>
        <begin position="21"/>
        <end position="178"/>
    </location>
</feature>
<feature type="region of interest" description="F5/8 type C-like">
    <location>
        <begin position="29"/>
        <end position="178"/>
    </location>
</feature>
<feature type="short sequence motif" description="Cell attachment site" evidence="3">
    <location>
        <begin position="100"/>
        <end position="102"/>
    </location>
</feature>
<feature type="binding site" evidence="2">
    <location>
        <position position="59"/>
    </location>
    <ligand>
        <name>Ca(2+)</name>
        <dbReference type="ChEBI" id="CHEBI:29108"/>
    </ligand>
</feature>
<feature type="binding site" evidence="1">
    <location>
        <position position="61"/>
    </location>
    <ligand>
        <name>Ca(2+)</name>
        <dbReference type="ChEBI" id="CHEBI:29108"/>
    </ligand>
</feature>
<feature type="binding site" evidence="2">
    <location>
        <position position="70"/>
    </location>
    <ligand>
        <name>Ca(2+)</name>
        <dbReference type="ChEBI" id="CHEBI:29108"/>
    </ligand>
</feature>
<feature type="binding site" evidence="2">
    <location>
        <position position="73"/>
    </location>
    <ligand>
        <name>alpha-L-fucose</name>
        <dbReference type="ChEBI" id="CHEBI:42548"/>
    </ligand>
</feature>
<feature type="binding site" evidence="2">
    <location>
        <position position="100"/>
    </location>
    <ligand>
        <name>alpha-L-fucose</name>
        <dbReference type="ChEBI" id="CHEBI:42548"/>
    </ligand>
</feature>
<feature type="binding site" evidence="2">
    <location>
        <position position="107"/>
    </location>
    <ligand>
        <name>alpha-L-fucose</name>
        <dbReference type="ChEBI" id="CHEBI:42548"/>
    </ligand>
</feature>
<feature type="binding site" evidence="1">
    <location>
        <position position="167"/>
    </location>
    <ligand>
        <name>Ca(2+)</name>
        <dbReference type="ChEBI" id="CHEBI:29108"/>
    </ligand>
</feature>
<feature type="binding site" evidence="2">
    <location>
        <position position="168"/>
    </location>
    <ligand>
        <name>Ca(2+)</name>
        <dbReference type="ChEBI" id="CHEBI:29108"/>
    </ligand>
</feature>
<feature type="disulfide bond" evidence="2">
    <location>
        <begin position="71"/>
        <end position="167"/>
    </location>
</feature>
<feature type="disulfide bond" evidence="2">
    <location>
        <begin position="103"/>
        <end position="104"/>
    </location>
</feature>
<feature type="disulfide bond" evidence="2">
    <location>
        <begin position="129"/>
        <end position="145"/>
    </location>
</feature>
<name>FUCL1_ANGJA</name>
<proteinExistence type="evidence at transcript level"/>
<comment type="function">
    <text evidence="4">Acts as a defensive agent. Recognizes blood group fucosylated oligosaccharides including A, B, H and Lewis B-type antigens. Does not recognize Lewis A antigen and has low affinity for monovalent haptens.</text>
</comment>
<comment type="subunit">
    <text evidence="2">Homotrimer.</text>
</comment>
<comment type="subcellular location">
    <subcellularLocation>
        <location evidence="4">Secreted</location>
        <location evidence="4">Extracellular space</location>
    </subcellularLocation>
</comment>
<comment type="tissue specificity">
    <text evidence="4">Parenchymal hepatocytes.</text>
</comment>
<comment type="miscellaneous">
    <text evidence="1">Binds 1 calcium ion per monomer.</text>
</comment>
<comment type="similarity">
    <text evidence="5">Belongs to the fucolectin family.</text>
</comment>
<dbReference type="EMBL" id="AB037867">
    <property type="protein sequence ID" value="BAB03523.1"/>
    <property type="molecule type" value="mRNA"/>
</dbReference>
<dbReference type="SMR" id="Q9I931"/>
<dbReference type="CAZy" id="CBM47">
    <property type="family name" value="Carbohydrate-Binding Module Family 47"/>
</dbReference>
<dbReference type="GO" id="GO:0005615">
    <property type="term" value="C:extracellular space"/>
    <property type="evidence" value="ECO:0000314"/>
    <property type="project" value="UniProtKB"/>
</dbReference>
<dbReference type="GO" id="GO:0005509">
    <property type="term" value="F:calcium ion binding"/>
    <property type="evidence" value="ECO:0000250"/>
    <property type="project" value="UniProtKB"/>
</dbReference>
<dbReference type="GO" id="GO:0030246">
    <property type="term" value="F:carbohydrate binding"/>
    <property type="evidence" value="ECO:0000314"/>
    <property type="project" value="UniProtKB"/>
</dbReference>
<dbReference type="GO" id="GO:0042806">
    <property type="term" value="F:fucose binding"/>
    <property type="evidence" value="ECO:0000314"/>
    <property type="project" value="UniProtKB"/>
</dbReference>
<dbReference type="GO" id="GO:0010185">
    <property type="term" value="P:regulation of cellular defense response"/>
    <property type="evidence" value="ECO:0000304"/>
    <property type="project" value="UniProtKB"/>
</dbReference>
<dbReference type="GO" id="GO:0001868">
    <property type="term" value="P:regulation of complement activation, lectin pathway"/>
    <property type="evidence" value="ECO:0000304"/>
    <property type="project" value="UniProtKB"/>
</dbReference>
<dbReference type="GO" id="GO:0045088">
    <property type="term" value="P:regulation of innate immune response"/>
    <property type="evidence" value="ECO:0000304"/>
    <property type="project" value="UniProtKB"/>
</dbReference>
<dbReference type="FunFam" id="2.60.120.260:FF:000183">
    <property type="entry name" value="Fucolectin"/>
    <property type="match status" value="1"/>
</dbReference>
<dbReference type="Gene3D" id="2.60.120.260">
    <property type="entry name" value="Galactose-binding domain-like"/>
    <property type="match status" value="1"/>
</dbReference>
<dbReference type="InterPro" id="IPR051941">
    <property type="entry name" value="BG_Antigen-Binding_Lectin"/>
</dbReference>
<dbReference type="InterPro" id="IPR006585">
    <property type="entry name" value="FTP1"/>
</dbReference>
<dbReference type="InterPro" id="IPR008979">
    <property type="entry name" value="Galactose-bd-like_sf"/>
</dbReference>
<dbReference type="PANTHER" id="PTHR45713">
    <property type="entry name" value="FTP DOMAIN-CONTAINING PROTEIN"/>
    <property type="match status" value="1"/>
</dbReference>
<dbReference type="PANTHER" id="PTHR45713:SF8">
    <property type="entry name" value="SI:CH211-215K15.4"/>
    <property type="match status" value="1"/>
</dbReference>
<dbReference type="Pfam" id="PF22633">
    <property type="entry name" value="F5_F8_type_C_2"/>
    <property type="match status" value="1"/>
</dbReference>
<dbReference type="SMART" id="SM00607">
    <property type="entry name" value="FTP"/>
    <property type="match status" value="1"/>
</dbReference>
<dbReference type="SUPFAM" id="SSF49785">
    <property type="entry name" value="Galactose-binding domain-like"/>
    <property type="match status" value="1"/>
</dbReference>
<reference evidence="5 6" key="1">
    <citation type="journal article" date="2000" name="J. Biol. Chem.">
        <title>Multiplicity, structures, and endocrine and exocrine natures of eel fucose-binding lectins.</title>
        <authorList>
            <person name="Honda S."/>
            <person name="Kashiwagi M."/>
            <person name="Miyamoto K."/>
            <person name="Takei Y."/>
            <person name="Hirose S."/>
        </authorList>
    </citation>
    <scope>NUCLEOTIDE SEQUENCE [MRNA]</scope>
    <scope>FUNCTION</scope>
    <scope>SUBCELLULAR LOCATION</scope>
    <scope>TISSUE SPECIFICITY</scope>
    <source>
        <tissue evidence="6">Liver</tissue>
    </source>
</reference>
<organism>
    <name type="scientific">Anguilla japonica</name>
    <name type="common">Japanese eel</name>
    <dbReference type="NCBI Taxonomy" id="7937"/>
    <lineage>
        <taxon>Eukaryota</taxon>
        <taxon>Metazoa</taxon>
        <taxon>Chordata</taxon>
        <taxon>Craniata</taxon>
        <taxon>Vertebrata</taxon>
        <taxon>Euteleostomi</taxon>
        <taxon>Actinopterygii</taxon>
        <taxon>Neopterygii</taxon>
        <taxon>Teleostei</taxon>
        <taxon>Anguilliformes</taxon>
        <taxon>Anguillidae</taxon>
        <taxon>Anguilla</taxon>
    </lineage>
</organism>
<sequence length="178" mass="19295">MKVKTIMLLFQILAISTIKSADVPNRYIQENVAVRGKATQSTLPSGAGAVLSLPGFAIDGNRDSDFSHGSCSHTTNSPNPWWRVDLLQLYTITSVTITNRGDCCGERISGARILIGNSLENNGINNPACSVIGSMETGETRTFHCPQPMIGRYVTVYLPKTEVLQLCEVEVNALLPVN</sequence>
<evidence type="ECO:0000250" key="1"/>
<evidence type="ECO:0000250" key="2">
    <source>
        <dbReference type="UniProtKB" id="Q7SIC1"/>
    </source>
</evidence>
<evidence type="ECO:0000255" key="3"/>
<evidence type="ECO:0000269" key="4">
    <source>
    </source>
</evidence>
<evidence type="ECO:0000305" key="5"/>
<evidence type="ECO:0000312" key="6">
    <source>
        <dbReference type="EMBL" id="BAB03523.1"/>
    </source>
</evidence>
<keyword id="KW-0106">Calcium</keyword>
<keyword id="KW-1015">Disulfide bond</keyword>
<keyword id="KW-0430">Lectin</keyword>
<keyword id="KW-0479">Metal-binding</keyword>
<keyword id="KW-0964">Secreted</keyword>
<keyword id="KW-0732">Signal</keyword>